<comment type="catalytic activity">
    <reaction evidence="1">
        <text>tRNA(Cys) + L-cysteine + ATP = L-cysteinyl-tRNA(Cys) + AMP + diphosphate</text>
        <dbReference type="Rhea" id="RHEA:17773"/>
        <dbReference type="Rhea" id="RHEA-COMP:9661"/>
        <dbReference type="Rhea" id="RHEA-COMP:9679"/>
        <dbReference type="ChEBI" id="CHEBI:30616"/>
        <dbReference type="ChEBI" id="CHEBI:33019"/>
        <dbReference type="ChEBI" id="CHEBI:35235"/>
        <dbReference type="ChEBI" id="CHEBI:78442"/>
        <dbReference type="ChEBI" id="CHEBI:78517"/>
        <dbReference type="ChEBI" id="CHEBI:456215"/>
        <dbReference type="EC" id="6.1.1.16"/>
    </reaction>
</comment>
<comment type="cofactor">
    <cofactor evidence="1">
        <name>Zn(2+)</name>
        <dbReference type="ChEBI" id="CHEBI:29105"/>
    </cofactor>
    <text evidence="1">Binds 1 zinc ion per subunit.</text>
</comment>
<comment type="subcellular location">
    <subcellularLocation>
        <location evidence="1">Cytoplasm</location>
    </subcellularLocation>
</comment>
<comment type="similarity">
    <text evidence="1">Belongs to the class-I aminoacyl-tRNA synthetase family.</text>
</comment>
<dbReference type="EC" id="6.1.1.16" evidence="1"/>
<dbReference type="EMBL" id="CP000504">
    <property type="protein sequence ID" value="ABL88279.1"/>
    <property type="molecule type" value="Genomic_DNA"/>
</dbReference>
<dbReference type="RefSeq" id="WP_011762854.1">
    <property type="nucleotide sequence ID" value="NC_008701.1"/>
</dbReference>
<dbReference type="SMR" id="A1RTJ7"/>
<dbReference type="STRING" id="384616.Pisl_1108"/>
<dbReference type="GeneID" id="4618166"/>
<dbReference type="KEGG" id="pis:Pisl_1108"/>
<dbReference type="eggNOG" id="arCOG00486">
    <property type="taxonomic scope" value="Archaea"/>
</dbReference>
<dbReference type="HOGENOM" id="CLU_013528_0_1_2"/>
<dbReference type="OrthoDB" id="9445at2157"/>
<dbReference type="Proteomes" id="UP000002595">
    <property type="component" value="Chromosome"/>
</dbReference>
<dbReference type="GO" id="GO:0005737">
    <property type="term" value="C:cytoplasm"/>
    <property type="evidence" value="ECO:0007669"/>
    <property type="project" value="UniProtKB-SubCell"/>
</dbReference>
<dbReference type="GO" id="GO:0005524">
    <property type="term" value="F:ATP binding"/>
    <property type="evidence" value="ECO:0007669"/>
    <property type="project" value="UniProtKB-UniRule"/>
</dbReference>
<dbReference type="GO" id="GO:0004817">
    <property type="term" value="F:cysteine-tRNA ligase activity"/>
    <property type="evidence" value="ECO:0007669"/>
    <property type="project" value="UniProtKB-UniRule"/>
</dbReference>
<dbReference type="GO" id="GO:0008270">
    <property type="term" value="F:zinc ion binding"/>
    <property type="evidence" value="ECO:0007669"/>
    <property type="project" value="UniProtKB-UniRule"/>
</dbReference>
<dbReference type="GO" id="GO:0006423">
    <property type="term" value="P:cysteinyl-tRNA aminoacylation"/>
    <property type="evidence" value="ECO:0007669"/>
    <property type="project" value="UniProtKB-UniRule"/>
</dbReference>
<dbReference type="CDD" id="cd00672">
    <property type="entry name" value="CysRS_core"/>
    <property type="match status" value="1"/>
</dbReference>
<dbReference type="FunFam" id="3.40.50.620:FF:000130">
    <property type="entry name" value="Cysteine--tRNA ligase"/>
    <property type="match status" value="1"/>
</dbReference>
<dbReference type="Gene3D" id="1.20.120.1910">
    <property type="entry name" value="Cysteine-tRNA ligase, C-terminal anti-codon recognition domain"/>
    <property type="match status" value="1"/>
</dbReference>
<dbReference type="Gene3D" id="3.40.50.620">
    <property type="entry name" value="HUPs"/>
    <property type="match status" value="1"/>
</dbReference>
<dbReference type="HAMAP" id="MF_00041">
    <property type="entry name" value="Cys_tRNA_synth"/>
    <property type="match status" value="1"/>
</dbReference>
<dbReference type="InterPro" id="IPR015803">
    <property type="entry name" value="Cys-tRNA-ligase"/>
</dbReference>
<dbReference type="InterPro" id="IPR015273">
    <property type="entry name" value="Cys-tRNA-synt_Ia_DALR"/>
</dbReference>
<dbReference type="InterPro" id="IPR024909">
    <property type="entry name" value="Cys-tRNA/MSH_ligase"/>
</dbReference>
<dbReference type="InterPro" id="IPR014729">
    <property type="entry name" value="Rossmann-like_a/b/a_fold"/>
</dbReference>
<dbReference type="InterPro" id="IPR032678">
    <property type="entry name" value="tRNA-synt_1_cat_dom"/>
</dbReference>
<dbReference type="InterPro" id="IPR009080">
    <property type="entry name" value="tRNAsynth_Ia_anticodon-bd"/>
</dbReference>
<dbReference type="NCBIfam" id="TIGR00435">
    <property type="entry name" value="cysS"/>
    <property type="match status" value="1"/>
</dbReference>
<dbReference type="PANTHER" id="PTHR10890:SF3">
    <property type="entry name" value="CYSTEINE--TRNA LIGASE, CYTOPLASMIC"/>
    <property type="match status" value="1"/>
</dbReference>
<dbReference type="PANTHER" id="PTHR10890">
    <property type="entry name" value="CYSTEINYL-TRNA SYNTHETASE"/>
    <property type="match status" value="1"/>
</dbReference>
<dbReference type="Pfam" id="PF09190">
    <property type="entry name" value="DALR_2"/>
    <property type="match status" value="1"/>
</dbReference>
<dbReference type="Pfam" id="PF01406">
    <property type="entry name" value="tRNA-synt_1e"/>
    <property type="match status" value="1"/>
</dbReference>
<dbReference type="PRINTS" id="PR00983">
    <property type="entry name" value="TRNASYNTHCYS"/>
</dbReference>
<dbReference type="SMART" id="SM00840">
    <property type="entry name" value="DALR_2"/>
    <property type="match status" value="1"/>
</dbReference>
<dbReference type="SUPFAM" id="SSF47323">
    <property type="entry name" value="Anticodon-binding domain of a subclass of class I aminoacyl-tRNA synthetases"/>
    <property type="match status" value="1"/>
</dbReference>
<dbReference type="SUPFAM" id="SSF52374">
    <property type="entry name" value="Nucleotidylyl transferase"/>
    <property type="match status" value="1"/>
</dbReference>
<evidence type="ECO:0000255" key="1">
    <source>
        <dbReference type="HAMAP-Rule" id="MF_00041"/>
    </source>
</evidence>
<name>SYC_PYRIL</name>
<protein>
    <recommendedName>
        <fullName evidence="1">Cysteine--tRNA ligase</fullName>
        <ecNumber evidence="1">6.1.1.16</ecNumber>
    </recommendedName>
    <alternativeName>
        <fullName evidence="1">Cysteinyl-tRNA synthetase</fullName>
        <shortName evidence="1">CysRS</shortName>
    </alternativeName>
</protein>
<organism>
    <name type="scientific">Pyrobaculum islandicum (strain DSM 4184 / JCM 9189 / GEO3)</name>
    <dbReference type="NCBI Taxonomy" id="384616"/>
    <lineage>
        <taxon>Archaea</taxon>
        <taxon>Thermoproteota</taxon>
        <taxon>Thermoprotei</taxon>
        <taxon>Thermoproteales</taxon>
        <taxon>Thermoproteaceae</taxon>
        <taxon>Pyrobaculum</taxon>
    </lineage>
</organism>
<accession>A1RTJ7</accession>
<sequence length="473" mass="55248">MRIYNTATRQVEEFTTYVPRLARGYVCGITPYDHMHVGHGRVYVFFDIFRRYLERLGYEVRLVINFTDIDDKIINRAKEEFGHEAYKRWREIPERYIAEYFEMTKKLYIKPAYAYPRVTENVEDMVKWISTLVEKGYAYVAPDGSVYFEVAKVPNYGVLSRQKIEELVAGARVEPEPGKRNPLDFALWKSWTPGEPWWDSPWCPGRPGWHLECVVMSTKHLGAPFDFHGGGADLIFPHHENEIAIARAYFGVDNFARYWIHVGYLTVRGEKMSKSLGNIITLREVLSKHSGEALRLAYAMSHYRKPMEFTYELLQQAEDMAKTLYTAYDELSQALRDAGEKDQEPLAQEALKYAEAFYGALDDDMSTPEAVQQLYGMARYIISTVLHKIEKISRETALTILNKYVEMADVLGVLERRQIPKELEEVVKTLVEVRAKLRQERQYQLADYIRQRLAELGVELHDFGPRTYYTYRR</sequence>
<reference key="1">
    <citation type="submission" date="2006-12" db="EMBL/GenBank/DDBJ databases">
        <title>Complete sequence of Pyrobaculum islandicum DSM 4184.</title>
        <authorList>
            <person name="Copeland A."/>
            <person name="Lucas S."/>
            <person name="Lapidus A."/>
            <person name="Barry K."/>
            <person name="Detter J.C."/>
            <person name="Glavina del Rio T."/>
            <person name="Dalin E."/>
            <person name="Tice H."/>
            <person name="Pitluck S."/>
            <person name="Meincke L."/>
            <person name="Brettin T."/>
            <person name="Bruce D."/>
            <person name="Han C."/>
            <person name="Tapia R."/>
            <person name="Gilna P."/>
            <person name="Schmutz J."/>
            <person name="Larimer F."/>
            <person name="Land M."/>
            <person name="Hauser L."/>
            <person name="Kyrpides N."/>
            <person name="Mikhailova N."/>
            <person name="Cozen A.E."/>
            <person name="Fitz-Gibbon S.T."/>
            <person name="House C.H."/>
            <person name="Saltikov C."/>
            <person name="Lowe T."/>
            <person name="Richardson P."/>
        </authorList>
    </citation>
    <scope>NUCLEOTIDE SEQUENCE [LARGE SCALE GENOMIC DNA]</scope>
    <source>
        <strain>DSM 4184 / JCM 9189 / GEO3</strain>
    </source>
</reference>
<feature type="chain" id="PRO_1000074625" description="Cysteine--tRNA ligase">
    <location>
        <begin position="1"/>
        <end position="473"/>
    </location>
</feature>
<feature type="short sequence motif" description="'HIGH' region">
    <location>
        <begin position="29"/>
        <end position="39"/>
    </location>
</feature>
<feature type="short sequence motif" description="'KMSKS' region">
    <location>
        <begin position="271"/>
        <end position="275"/>
    </location>
</feature>
<feature type="binding site" evidence="1">
    <location>
        <position position="27"/>
    </location>
    <ligand>
        <name>Zn(2+)</name>
        <dbReference type="ChEBI" id="CHEBI:29105"/>
    </ligand>
</feature>
<feature type="binding site" evidence="1">
    <location>
        <position position="213"/>
    </location>
    <ligand>
        <name>Zn(2+)</name>
        <dbReference type="ChEBI" id="CHEBI:29105"/>
    </ligand>
</feature>
<feature type="binding site" evidence="1">
    <location>
        <position position="238"/>
    </location>
    <ligand>
        <name>Zn(2+)</name>
        <dbReference type="ChEBI" id="CHEBI:29105"/>
    </ligand>
</feature>
<feature type="binding site" evidence="1">
    <location>
        <position position="242"/>
    </location>
    <ligand>
        <name>Zn(2+)</name>
        <dbReference type="ChEBI" id="CHEBI:29105"/>
    </ligand>
</feature>
<feature type="binding site" evidence="1">
    <location>
        <position position="274"/>
    </location>
    <ligand>
        <name>ATP</name>
        <dbReference type="ChEBI" id="CHEBI:30616"/>
    </ligand>
</feature>
<proteinExistence type="inferred from homology"/>
<gene>
    <name evidence="1" type="primary">cysS</name>
    <name type="ordered locus">Pisl_1108</name>
</gene>
<keyword id="KW-0030">Aminoacyl-tRNA synthetase</keyword>
<keyword id="KW-0067">ATP-binding</keyword>
<keyword id="KW-0963">Cytoplasm</keyword>
<keyword id="KW-0436">Ligase</keyword>
<keyword id="KW-0479">Metal-binding</keyword>
<keyword id="KW-0547">Nucleotide-binding</keyword>
<keyword id="KW-0648">Protein biosynthesis</keyword>
<keyword id="KW-0862">Zinc</keyword>